<proteinExistence type="inferred from homology"/>
<accession>Q3J6V4</accession>
<protein>
    <recommendedName>
        <fullName evidence="1">UPF0235 protein Noc_3000</fullName>
    </recommendedName>
</protein>
<name>Y3000_NITOC</name>
<keyword id="KW-1185">Reference proteome</keyword>
<gene>
    <name type="ordered locus">Noc_3000</name>
</gene>
<feature type="chain" id="PRO_1000056777" description="UPF0235 protein Noc_3000">
    <location>
        <begin position="1"/>
        <end position="102"/>
    </location>
</feature>
<evidence type="ECO:0000255" key="1">
    <source>
        <dbReference type="HAMAP-Rule" id="MF_00634"/>
    </source>
</evidence>
<comment type="similarity">
    <text evidence="1">Belongs to the UPF0235 family.</text>
</comment>
<organism>
    <name type="scientific">Nitrosococcus oceani (strain ATCC 19707 / BCRC 17464 / JCM 30415 / NCIMB 11848 / C-107)</name>
    <dbReference type="NCBI Taxonomy" id="323261"/>
    <lineage>
        <taxon>Bacteria</taxon>
        <taxon>Pseudomonadati</taxon>
        <taxon>Pseudomonadota</taxon>
        <taxon>Gammaproteobacteria</taxon>
        <taxon>Chromatiales</taxon>
        <taxon>Chromatiaceae</taxon>
        <taxon>Nitrosococcus</taxon>
    </lineage>
</organism>
<sequence length="102" mass="11708">MAVRWYCWQQEALIIQIRLQPRAKGDEVIGPHGDRLKIRITAPPVEGKANTHLLRFLAKTFQVSRNQVYLLSGATSRDKRVRIEKPTKLLPGITPPIRKTVR</sequence>
<reference key="1">
    <citation type="journal article" date="2006" name="Appl. Environ. Microbiol.">
        <title>Complete genome sequence of the marine, chemolithoautotrophic, ammonia-oxidizing bacterium Nitrosococcus oceani ATCC 19707.</title>
        <authorList>
            <person name="Klotz M.G."/>
            <person name="Arp D.J."/>
            <person name="Chain P.S.G."/>
            <person name="El-Sheikh A.F."/>
            <person name="Hauser L.J."/>
            <person name="Hommes N.G."/>
            <person name="Larimer F.W."/>
            <person name="Malfatti S.A."/>
            <person name="Norton J.M."/>
            <person name="Poret-Peterson A.T."/>
            <person name="Vergez L.M."/>
            <person name="Ward B.B."/>
        </authorList>
    </citation>
    <scope>NUCLEOTIDE SEQUENCE [LARGE SCALE GENOMIC DNA]</scope>
    <source>
        <strain>ATCC 19707 / BCRC 17464 / JCM 30415 / NCIMB 11848 / C-107</strain>
    </source>
</reference>
<dbReference type="EMBL" id="CP000127">
    <property type="protein sequence ID" value="ABA59442.1"/>
    <property type="molecule type" value="Genomic_DNA"/>
</dbReference>
<dbReference type="RefSeq" id="WP_002812300.1">
    <property type="nucleotide sequence ID" value="NC_007484.1"/>
</dbReference>
<dbReference type="SMR" id="Q3J6V4"/>
<dbReference type="FunCoup" id="Q3J6V4">
    <property type="interactions" value="286"/>
</dbReference>
<dbReference type="STRING" id="323261.Noc_3000"/>
<dbReference type="KEGG" id="noc:Noc_3000"/>
<dbReference type="eggNOG" id="COG1872">
    <property type="taxonomic scope" value="Bacteria"/>
</dbReference>
<dbReference type="HOGENOM" id="CLU_130694_5_0_6"/>
<dbReference type="InParanoid" id="Q3J6V4"/>
<dbReference type="Proteomes" id="UP000006838">
    <property type="component" value="Chromosome"/>
</dbReference>
<dbReference type="GO" id="GO:0005737">
    <property type="term" value="C:cytoplasm"/>
    <property type="evidence" value="ECO:0007669"/>
    <property type="project" value="TreeGrafter"/>
</dbReference>
<dbReference type="Gene3D" id="3.30.1200.10">
    <property type="entry name" value="YggU-like"/>
    <property type="match status" value="1"/>
</dbReference>
<dbReference type="HAMAP" id="MF_00634">
    <property type="entry name" value="UPF0235"/>
    <property type="match status" value="1"/>
</dbReference>
<dbReference type="InterPro" id="IPR003746">
    <property type="entry name" value="DUF167"/>
</dbReference>
<dbReference type="InterPro" id="IPR036591">
    <property type="entry name" value="YggU-like_sf"/>
</dbReference>
<dbReference type="NCBIfam" id="TIGR00251">
    <property type="entry name" value="DUF167 family protein"/>
    <property type="match status" value="1"/>
</dbReference>
<dbReference type="PANTHER" id="PTHR13420">
    <property type="entry name" value="UPF0235 PROTEIN C15ORF40"/>
    <property type="match status" value="1"/>
</dbReference>
<dbReference type="PANTHER" id="PTHR13420:SF7">
    <property type="entry name" value="UPF0235 PROTEIN C15ORF40"/>
    <property type="match status" value="1"/>
</dbReference>
<dbReference type="Pfam" id="PF02594">
    <property type="entry name" value="DUF167"/>
    <property type="match status" value="1"/>
</dbReference>
<dbReference type="SMART" id="SM01152">
    <property type="entry name" value="DUF167"/>
    <property type="match status" value="1"/>
</dbReference>
<dbReference type="SUPFAM" id="SSF69786">
    <property type="entry name" value="YggU-like"/>
    <property type="match status" value="1"/>
</dbReference>